<proteinExistence type="inferred from homology"/>
<reference key="1">
    <citation type="journal article" date="2013" name="Am. J. Trop. Med. Hyg.">
        <title>Detection of human monkeypox in the republic of the congo following intensive community education.</title>
        <authorList>
            <person name="Reynolds M.G."/>
            <person name="Emerson G.L."/>
            <person name="Pukuta E."/>
            <person name="Karhemere S."/>
            <person name="Muyembe J.J."/>
            <person name="Bikindou A."/>
            <person name="McCollum A.M."/>
            <person name="Moses C."/>
            <person name="Wilkins K."/>
            <person name="Zhao H."/>
            <person name="Damon I.K."/>
            <person name="Karem K.L."/>
            <person name="Li Y."/>
            <person name="Carroll D.S."/>
            <person name="Mombouli J.V."/>
        </authorList>
    </citation>
    <scope>NUCLEOTIDE SEQUENCE [GENOMIC DNA]</scope>
    <source>
        <strain>ROC2010</strain>
    </source>
</reference>
<reference key="2">
    <citation type="journal article" date="2022" name="J. Infect. Dis.">
        <title>Exportation of Monkeypox virus from the African continent.</title>
        <authorList>
            <person name="Mauldin M.R."/>
            <person name="McCollum A.M."/>
            <person name="Nakazawa Y.J."/>
            <person name="Mandra A."/>
            <person name="Whitehouse E.R."/>
            <person name="Davidson W."/>
            <person name="Zhao H."/>
            <person name="Gao J."/>
            <person name="Li Y."/>
            <person name="Doty J."/>
            <person name="Yinka-Ogunleye A."/>
            <person name="Akinpelu A."/>
            <person name="Aruna O."/>
            <person name="Naidoo D."/>
            <person name="Lewandowski K."/>
            <person name="Afrough B."/>
            <person name="Graham V."/>
            <person name="Aarons E."/>
            <person name="Hewson R."/>
            <person name="Vipond R."/>
            <person name="Dunning J."/>
            <person name="Chand M."/>
            <person name="Brown C."/>
            <person name="Cohen-Gihon I."/>
            <person name="Erez N."/>
            <person name="Shifman O."/>
            <person name="Israeli O."/>
            <person name="Sharon M."/>
            <person name="Schwartz E."/>
            <person name="Beth-Din A."/>
            <person name="Zvi A."/>
            <person name="Mak T.M."/>
            <person name="Ng Y.K."/>
            <person name="Cui L."/>
            <person name="Lin R.T.P."/>
            <person name="Olson V.A."/>
            <person name="Brooks T."/>
            <person name="Paran N."/>
            <person name="Ihekweazu C."/>
            <person name="Reynolds M.G."/>
        </authorList>
    </citation>
    <scope>NUCLEOTIDE SEQUENCE [LARGE SCALE GENOMIC DNA]</scope>
    <source>
        <strain>MPXV-M5312_HM12_Rivers</strain>
    </source>
</reference>
<name>PG143_MONPV</name>
<sequence>MGAAVTLNRIKIETGIADIRDKYMVLDFNYPEYNRAVRFAEESYMYYYETSPGEIKPKFCLIDGMSIDHCSSFIVPEFAKQYVLIHGEPCSSFKFRPGSLIYYQNEVTPEYIKDLKYATDYIASGQRCHFIKKDYLLGDSDSVAKCCSKTNTKHCPKIFNNNYKTEHCDDFMTGFCRNDPGNPNCLEWLRVKRKPAMSTYSDICSKHMDARYCSEFIRIIRPDYFTFGDTALYVFCNDHKGNRNCWCANYPKSNSGDKYLGPRVCWLHECTDESRDRKWLYYNQDVQRTRCKYVGCTINVNSLALKNSQAELTSNCTRTTSAVGDVHPGEPVVNDKIKLPTWLGASITLVVISVIFYFISIYSRPKIKTNDINVRRR</sequence>
<dbReference type="EMBL" id="KC257461">
    <property type="protein sequence ID" value="AGF37032.1"/>
    <property type="molecule type" value="Genomic_DNA"/>
</dbReference>
<dbReference type="EMBL" id="MT903340">
    <property type="protein sequence ID" value="QNP12998.1"/>
    <property type="molecule type" value="Genomic_DNA"/>
</dbReference>
<dbReference type="RefSeq" id="YP_010377125.1">
    <property type="nucleotide sequence ID" value="NC_063383.1"/>
</dbReference>
<dbReference type="SMR" id="A0A7H0DNB5"/>
<dbReference type="GeneID" id="72551538"/>
<dbReference type="Proteomes" id="UP000516359">
    <property type="component" value="Genome"/>
</dbReference>
<dbReference type="GO" id="GO:0016020">
    <property type="term" value="C:membrane"/>
    <property type="evidence" value="ECO:0007669"/>
    <property type="project" value="UniProtKB-KW"/>
</dbReference>
<dbReference type="GO" id="GO:0019031">
    <property type="term" value="C:viral envelope"/>
    <property type="evidence" value="ECO:0007669"/>
    <property type="project" value="UniProtKB-KW"/>
</dbReference>
<dbReference type="GO" id="GO:0055036">
    <property type="term" value="C:virion membrane"/>
    <property type="evidence" value="ECO:0007669"/>
    <property type="project" value="UniProtKB-SubCell"/>
</dbReference>
<dbReference type="GO" id="GO:0005524">
    <property type="term" value="F:ATP binding"/>
    <property type="evidence" value="ECO:0007669"/>
    <property type="project" value="UniProtKB-KW"/>
</dbReference>
<dbReference type="GO" id="GO:0003677">
    <property type="term" value="F:DNA binding"/>
    <property type="evidence" value="ECO:0007669"/>
    <property type="project" value="UniProtKB-KW"/>
</dbReference>
<dbReference type="GO" id="GO:0004386">
    <property type="term" value="F:helicase activity"/>
    <property type="evidence" value="ECO:0007669"/>
    <property type="project" value="UniProtKB-KW"/>
</dbReference>
<dbReference type="GO" id="GO:0016787">
    <property type="term" value="F:hydrolase activity"/>
    <property type="evidence" value="ECO:0007669"/>
    <property type="project" value="UniProtKB-KW"/>
</dbReference>
<dbReference type="GO" id="GO:0006353">
    <property type="term" value="P:DNA-templated transcription termination"/>
    <property type="evidence" value="ECO:0007669"/>
    <property type="project" value="UniProtKB-KW"/>
</dbReference>
<dbReference type="GO" id="GO:0039663">
    <property type="term" value="P:membrane fusion involved in viral entry into host cell"/>
    <property type="evidence" value="ECO:0007669"/>
    <property type="project" value="UniProtKB-KW"/>
</dbReference>
<dbReference type="GO" id="GO:0046718">
    <property type="term" value="P:symbiont entry into host cell"/>
    <property type="evidence" value="ECO:0007669"/>
    <property type="project" value="UniProtKB-KW"/>
</dbReference>
<dbReference type="InterPro" id="IPR004251">
    <property type="entry name" value="Pox_virus_G9/A16"/>
</dbReference>
<dbReference type="Pfam" id="PF03003">
    <property type="entry name" value="Pox_G9-A16"/>
    <property type="match status" value="1"/>
</dbReference>
<evidence type="ECO:0000250" key="1">
    <source>
        <dbReference type="UniProtKB" id="P16710"/>
    </source>
</evidence>
<evidence type="ECO:0000255" key="2"/>
<evidence type="ECO:0000305" key="3"/>
<protein>
    <recommendedName>
        <fullName>Virion membrane protein OPG143</fullName>
    </recommendedName>
</protein>
<feature type="initiator methionine" description="Removed; by host">
    <location>
        <position position="1"/>
    </location>
</feature>
<feature type="chain" id="PRO_0000457531" description="Virion membrane protein OPG143">
    <location>
        <begin position="2"/>
        <end position="377"/>
    </location>
</feature>
<feature type="topological domain" description="Virion surface" evidence="2">
    <location>
        <begin position="2"/>
        <end position="341"/>
    </location>
</feature>
<feature type="transmembrane region" description="Helical" evidence="2">
    <location>
        <begin position="342"/>
        <end position="362"/>
    </location>
</feature>
<feature type="topological domain" description="Intravirion" evidence="2">
    <location>
        <begin position="363"/>
        <end position="377"/>
    </location>
</feature>
<feature type="lipid moiety-binding region" description="N-myristoyl glycine; by host" evidence="1">
    <location>
        <position position="2"/>
    </location>
</feature>
<gene>
    <name type="primary">OPG143</name>
    <name type="ORF">MPXVgp127</name>
</gene>
<accession>A0A7H0DNB5</accession>
<keyword id="KW-0067">ATP-binding</keyword>
<keyword id="KW-1015">Disulfide bond</keyword>
<keyword id="KW-0238">DNA-binding</keyword>
<keyword id="KW-1168">Fusion of virus membrane with host membrane</keyword>
<keyword id="KW-0347">Helicase</keyword>
<keyword id="KW-0378">Hydrolase</keyword>
<keyword id="KW-0426">Late protein</keyword>
<keyword id="KW-0449">Lipoprotein</keyword>
<keyword id="KW-0472">Membrane</keyword>
<keyword id="KW-0519">Myristate</keyword>
<keyword id="KW-0547">Nucleotide-binding</keyword>
<keyword id="KW-0597">Phosphoprotein</keyword>
<keyword id="KW-1185">Reference proteome</keyword>
<keyword id="KW-0735">Signal-anchor</keyword>
<keyword id="KW-0804">Transcription</keyword>
<keyword id="KW-0805">Transcription regulation</keyword>
<keyword id="KW-0806">Transcription termination</keyword>
<keyword id="KW-0812">Transmembrane</keyword>
<keyword id="KW-1133">Transmembrane helix</keyword>
<keyword id="KW-0261">Viral envelope protein</keyword>
<keyword id="KW-1162">Viral penetration into host cytoplasm</keyword>
<keyword id="KW-0946">Virion</keyword>
<keyword id="KW-1160">Virus entry into host cell</keyword>
<organism>
    <name type="scientific">Monkeypox virus</name>
    <dbReference type="NCBI Taxonomy" id="10244"/>
    <lineage>
        <taxon>Viruses</taxon>
        <taxon>Varidnaviria</taxon>
        <taxon>Bamfordvirae</taxon>
        <taxon>Nucleocytoviricota</taxon>
        <taxon>Pokkesviricetes</taxon>
        <taxon>Chitovirales</taxon>
        <taxon>Poxviridae</taxon>
        <taxon>Chordopoxvirinae</taxon>
        <taxon>Orthopoxvirus</taxon>
    </lineage>
</organism>
<comment type="function">
    <text evidence="1">Envelope protein part of the entry-fusion complex responsible for the virus membrane fusion with host cell membrane during virus entry. Also plays a role in cell-cell fusion (syncytium formation).</text>
</comment>
<comment type="subunit">
    <text evidence="1">Part of a stable entry-fusion complex (EFC) which is at least composed of proteins OPG143, OPG147, OPG155, OPG086, OPG094, OPG107, OPG104, and OPG099. Formation of the viral membrane is necessary for the assembly of the complex. Interacts with OPG094. Interacts with OPG153.</text>
</comment>
<comment type="subcellular location">
    <subcellularLocation>
        <location evidence="1">Virion membrane</location>
        <topology evidence="1">Single-pass type II membrane protein</topology>
    </subcellularLocation>
    <text evidence="1">Component of the mature virion (MV) membrane. The mature virion is located in the cytoplasm of infected cells and is probably released by cell lysis.</text>
</comment>
<comment type="PTM">
    <text evidence="1">Most cysteines are linked by disulfide bonds. They are created by the viral disulfide bond formation pathway, a poxvirus-specific redox pathway that operates on the cytoplasmic side of the MV membranes.</text>
</comment>
<comment type="similarity">
    <text evidence="3">Belongs to the orthopoxvirus OPG143 family.</text>
</comment>
<organismHost>
    <name type="scientific">Cynomys gunnisoni</name>
    <name type="common">Gunnison's prairie dog</name>
    <name type="synonym">Spermophilus gunnisoni</name>
    <dbReference type="NCBI Taxonomy" id="45479"/>
</organismHost>
<organismHost>
    <name type="scientific">Cynomys leucurus</name>
    <name type="common">White-tailed prairie dog</name>
    <dbReference type="NCBI Taxonomy" id="99825"/>
</organismHost>
<organismHost>
    <name type="scientific">Cynomys ludovicianus</name>
    <name type="common">Black-tailed prairie dog</name>
    <dbReference type="NCBI Taxonomy" id="45480"/>
</organismHost>
<organismHost>
    <name type="scientific">Cynomys mexicanus</name>
    <name type="common">Mexican prairie dog</name>
    <dbReference type="NCBI Taxonomy" id="99826"/>
</organismHost>
<organismHost>
    <name type="scientific">Cynomys parvidens</name>
    <name type="common">Utah prairie dog</name>
    <dbReference type="NCBI Taxonomy" id="99827"/>
</organismHost>
<organismHost>
    <name type="scientific">Gliridae</name>
    <name type="common">dormice</name>
    <dbReference type="NCBI Taxonomy" id="30650"/>
</organismHost>
<organismHost>
    <name type="scientific">Heliosciurus ruwenzorii</name>
    <name type="common">Ruwenzori sun squirrel</name>
    <dbReference type="NCBI Taxonomy" id="226685"/>
</organismHost>
<organismHost>
    <name type="scientific">Homo sapiens</name>
    <name type="common">Human</name>
    <dbReference type="NCBI Taxonomy" id="9606"/>
</organismHost>
<organismHost>
    <name type="scientific">Mus musculus</name>
    <name type="common">Mouse</name>
    <dbReference type="NCBI Taxonomy" id="10090"/>
</organismHost>